<reference key="1">
    <citation type="journal article" date="1998" name="Science">
        <title>Genome sequence of the nematode C. elegans: a platform for investigating biology.</title>
        <authorList>
            <consortium name="The C. elegans sequencing consortium"/>
        </authorList>
    </citation>
    <scope>NUCLEOTIDE SEQUENCE [LARGE SCALE GENOMIC DNA]</scope>
    <source>
        <strain>Bristol N2</strain>
    </source>
</reference>
<gene>
    <name type="ORF">Y51H4A.7</name>
</gene>
<protein>
    <recommendedName>
        <fullName>Probable urocanate hydratase</fullName>
        <shortName>Urocanase</shortName>
        <ecNumber>4.2.1.49</ecNumber>
    </recommendedName>
    <alternativeName>
        <fullName>Imidazolonepropionate hydrolase</fullName>
    </alternativeName>
</protein>
<keyword id="KW-0369">Histidine metabolism</keyword>
<keyword id="KW-0456">Lyase</keyword>
<keyword id="KW-0520">NAD</keyword>
<keyword id="KW-1185">Reference proteome</keyword>
<accession>Q9NAE2</accession>
<sequence length="670" mass="74407">MNIPSLFVDPFSPLLEHPTEQRAKNVAHAPKRPCNLTQTEKMLAVRNALRYIPKEHHVLLATEFAEELNTYGHIYGYRFMPNFDLFAPPVSEIGAHCEQASAIILMILNNLDKRVAQFPQELVTYGGNGQVFSNWIQFRLVLRYLYTMTDHQTLVLYSGHPLGLFPSTPDSPRMTVTNGMMIPSYSTKELYDKYFALGVTQYGQMTAGSFCYIGPQGIVHGTTITVLNAGRRMGLDSLAGKVFVTAGLGGMSGAQPKAAKIAGCIGVIAEISDTALLKRHQQGWLDVYSKDLEEIVNWIKEYREKKEAISIGYLGNVVDLWERLAEEPECLVELGSDQTSLHNPFLGGFYPAGLTFEQSNQMMTSDPVKFKKLVQNSLIRQIAAIDKIAAKGMYFWDYGNAFLLECQRAGANLLREDAQDDKSFRYPSYMQDIMGDIFSMGFGPFRWVCTSGKPEDLRLTDQTACKIIDELKDTDVPEYVKQQYLDNKKWIEEAEKNKLVVGSQARILYSDRAGRVALASAFNELVKSGKVSAAIVISRDHHDVSGTDSPFRETSNVYDGSAFTADMAVQNCIGDSFRGATWVALHNGGGVGWGDVINGGFGIVLDGSSDAARRAEGMLNWDVPNGVTRRSWSGNAKAQEAIQRAEKQVDGLRVTLPVEADEELLKKLKF</sequence>
<comment type="catalytic activity">
    <reaction>
        <text>4-imidazolone-5-propanoate = trans-urocanate + H2O</text>
        <dbReference type="Rhea" id="RHEA:13101"/>
        <dbReference type="ChEBI" id="CHEBI:15377"/>
        <dbReference type="ChEBI" id="CHEBI:17771"/>
        <dbReference type="ChEBI" id="CHEBI:77893"/>
        <dbReference type="EC" id="4.2.1.49"/>
    </reaction>
</comment>
<comment type="cofactor">
    <cofactor evidence="1">
        <name>NAD(+)</name>
        <dbReference type="ChEBI" id="CHEBI:57540"/>
    </cofactor>
</comment>
<comment type="pathway">
    <text>Amino-acid degradation; L-histidine degradation into L-glutamate; N-formimidoyl-L-glutamate from L-histidine: step 2/3.</text>
</comment>
<comment type="similarity">
    <text evidence="3">Belongs to the urocanase family.</text>
</comment>
<dbReference type="EC" id="4.2.1.49"/>
<dbReference type="EMBL" id="AL132952">
    <property type="protein sequence ID" value="CAB61139.2"/>
    <property type="molecule type" value="Genomic_DNA"/>
</dbReference>
<dbReference type="RefSeq" id="NP_502964.2">
    <property type="nucleotide sequence ID" value="NM_070563.4"/>
</dbReference>
<dbReference type="SMR" id="Q9NAE2"/>
<dbReference type="BioGRID" id="43538">
    <property type="interactions" value="13"/>
</dbReference>
<dbReference type="FunCoup" id="Q9NAE2">
    <property type="interactions" value="10"/>
</dbReference>
<dbReference type="STRING" id="6239.Y51H4A.7.1"/>
<dbReference type="PaxDb" id="6239-Y51H4A.7.1"/>
<dbReference type="PeptideAtlas" id="Q9NAE2"/>
<dbReference type="EnsemblMetazoa" id="Y51H4A.7.1">
    <property type="protein sequence ID" value="Y51H4A.7.1"/>
    <property type="gene ID" value="WBGene00013103"/>
</dbReference>
<dbReference type="EnsemblMetazoa" id="Y51H4A.7.2">
    <property type="protein sequence ID" value="Y51H4A.7.2"/>
    <property type="gene ID" value="WBGene00013103"/>
</dbReference>
<dbReference type="UCSC" id="Y51H4A.7.1">
    <property type="organism name" value="c. elegans"/>
</dbReference>
<dbReference type="AGR" id="WB:WBGene00013103"/>
<dbReference type="WormBase" id="Y51H4A.7">
    <property type="protein sequence ID" value="CE35671"/>
    <property type="gene ID" value="WBGene00013103"/>
</dbReference>
<dbReference type="eggNOG" id="ENOG502QR75">
    <property type="taxonomic scope" value="Eukaryota"/>
</dbReference>
<dbReference type="GeneTree" id="ENSGT00390000015136"/>
<dbReference type="HOGENOM" id="CLU_018868_3_0_1"/>
<dbReference type="InParanoid" id="Q9NAE2"/>
<dbReference type="OMA" id="VHFQGLP"/>
<dbReference type="OrthoDB" id="194468at2759"/>
<dbReference type="PhylomeDB" id="Q9NAE2"/>
<dbReference type="Reactome" id="R-CEL-70921">
    <property type="pathway name" value="Histidine catabolism"/>
</dbReference>
<dbReference type="UniPathway" id="UPA00379">
    <property type="reaction ID" value="UER00550"/>
</dbReference>
<dbReference type="PRO" id="PR:Q9NAE2"/>
<dbReference type="Proteomes" id="UP000001940">
    <property type="component" value="Chromosome IV"/>
</dbReference>
<dbReference type="Bgee" id="WBGene00013103">
    <property type="expression patterns" value="Expressed in larva and 3 other cell types or tissues"/>
</dbReference>
<dbReference type="GO" id="GO:0016153">
    <property type="term" value="F:urocanate hydratase activity"/>
    <property type="evidence" value="ECO:0000318"/>
    <property type="project" value="GO_Central"/>
</dbReference>
<dbReference type="GO" id="GO:0006548">
    <property type="term" value="P:L-histidine catabolic process"/>
    <property type="evidence" value="ECO:0000318"/>
    <property type="project" value="GO_Central"/>
</dbReference>
<dbReference type="GO" id="GO:0019556">
    <property type="term" value="P:L-histidine catabolic process to glutamate and formamide"/>
    <property type="evidence" value="ECO:0007669"/>
    <property type="project" value="UniProtKB-UniPathway"/>
</dbReference>
<dbReference type="GO" id="GO:0019557">
    <property type="term" value="P:L-histidine catabolic process to glutamate and formate"/>
    <property type="evidence" value="ECO:0007669"/>
    <property type="project" value="UniProtKB-UniPathway"/>
</dbReference>
<dbReference type="FunFam" id="3.40.1770.10:FF:000003">
    <property type="entry name" value="Urocanate hydratase 1"/>
    <property type="match status" value="1"/>
</dbReference>
<dbReference type="FunFam" id="3.40.50.10730:FF:000002">
    <property type="entry name" value="Urocanate hydratase 1"/>
    <property type="match status" value="1"/>
</dbReference>
<dbReference type="Gene3D" id="3.40.50.10730">
    <property type="entry name" value="Urocanase like domains"/>
    <property type="match status" value="1"/>
</dbReference>
<dbReference type="Gene3D" id="3.40.1770.10">
    <property type="entry name" value="Urocanase superfamily"/>
    <property type="match status" value="1"/>
</dbReference>
<dbReference type="HAMAP" id="MF_00577">
    <property type="entry name" value="HutU"/>
    <property type="match status" value="1"/>
</dbReference>
<dbReference type="InterPro" id="IPR055351">
    <property type="entry name" value="Urocanase"/>
</dbReference>
<dbReference type="InterPro" id="IPR023637">
    <property type="entry name" value="Urocanase-like"/>
</dbReference>
<dbReference type="InterPro" id="IPR035401">
    <property type="entry name" value="Urocanase_C"/>
</dbReference>
<dbReference type="InterPro" id="IPR038364">
    <property type="entry name" value="Urocanase_central_sf"/>
</dbReference>
<dbReference type="InterPro" id="IPR023636">
    <property type="entry name" value="Urocanase_CS"/>
</dbReference>
<dbReference type="InterPro" id="IPR035400">
    <property type="entry name" value="Urocanase_N"/>
</dbReference>
<dbReference type="InterPro" id="IPR035085">
    <property type="entry name" value="Urocanase_Rossmann-like"/>
</dbReference>
<dbReference type="InterPro" id="IPR036190">
    <property type="entry name" value="Urocanase_sf"/>
</dbReference>
<dbReference type="NCBIfam" id="NF003820">
    <property type="entry name" value="PRK05414.1"/>
    <property type="match status" value="1"/>
</dbReference>
<dbReference type="PANTHER" id="PTHR12216">
    <property type="entry name" value="UROCANATE HYDRATASE"/>
    <property type="match status" value="1"/>
</dbReference>
<dbReference type="PANTHER" id="PTHR12216:SF3">
    <property type="entry name" value="UROCANATE HYDRATASE"/>
    <property type="match status" value="1"/>
</dbReference>
<dbReference type="Pfam" id="PF01175">
    <property type="entry name" value="Urocanase"/>
    <property type="match status" value="1"/>
</dbReference>
<dbReference type="Pfam" id="PF17392">
    <property type="entry name" value="Urocanase_C"/>
    <property type="match status" value="1"/>
</dbReference>
<dbReference type="Pfam" id="PF17391">
    <property type="entry name" value="Urocanase_N"/>
    <property type="match status" value="1"/>
</dbReference>
<dbReference type="PIRSF" id="PIRSF001423">
    <property type="entry name" value="Urocanate_hydrat"/>
    <property type="match status" value="1"/>
</dbReference>
<dbReference type="SUPFAM" id="SSF111326">
    <property type="entry name" value="Urocanase"/>
    <property type="match status" value="1"/>
</dbReference>
<dbReference type="PROSITE" id="PS01233">
    <property type="entry name" value="UROCANASE"/>
    <property type="match status" value="1"/>
</dbReference>
<name>HUTU_CAEEL</name>
<proteinExistence type="inferred from homology"/>
<feature type="chain" id="PRO_0000207376" description="Probable urocanate hydratase">
    <location>
        <begin position="1"/>
        <end position="670"/>
    </location>
</feature>
<feature type="binding site" evidence="2">
    <location>
        <begin position="126"/>
        <end position="127"/>
    </location>
    <ligand>
        <name>NAD(+)</name>
        <dbReference type="ChEBI" id="CHEBI:57540"/>
    </ligand>
</feature>
<feature type="binding site" evidence="2">
    <location>
        <position position="204"/>
    </location>
    <ligand>
        <name>NAD(+)</name>
        <dbReference type="ChEBI" id="CHEBI:57540"/>
    </ligand>
</feature>
<feature type="binding site" evidence="2">
    <location>
        <begin position="250"/>
        <end position="252"/>
    </location>
    <ligand>
        <name>NAD(+)</name>
        <dbReference type="ChEBI" id="CHEBI:57540"/>
    </ligand>
</feature>
<feature type="binding site" evidence="2">
    <location>
        <position position="270"/>
    </location>
    <ligand>
        <name>NAD(+)</name>
        <dbReference type="ChEBI" id="CHEBI:57540"/>
    </ligand>
</feature>
<feature type="binding site" evidence="2">
    <location>
        <begin position="316"/>
        <end position="317"/>
    </location>
    <ligand>
        <name>NAD(+)</name>
        <dbReference type="ChEBI" id="CHEBI:57540"/>
    </ligand>
</feature>
<feature type="binding site" evidence="2">
    <location>
        <begin position="338"/>
        <end position="342"/>
    </location>
    <ligand>
        <name>NAD(+)</name>
        <dbReference type="ChEBI" id="CHEBI:57540"/>
    </ligand>
</feature>
<feature type="binding site" evidence="2">
    <location>
        <begin position="349"/>
        <end position="350"/>
    </location>
    <ligand>
        <name>NAD(+)</name>
        <dbReference type="ChEBI" id="CHEBI:57540"/>
    </ligand>
</feature>
<feature type="binding site" evidence="2">
    <location>
        <position position="398"/>
    </location>
    <ligand>
        <name>NAD(+)</name>
        <dbReference type="ChEBI" id="CHEBI:57540"/>
    </ligand>
</feature>
<feature type="binding site" evidence="2">
    <location>
        <position position="590"/>
    </location>
    <ligand>
        <name>NAD(+)</name>
        <dbReference type="ChEBI" id="CHEBI:57540"/>
    </ligand>
</feature>
<evidence type="ECO:0000250" key="1"/>
<evidence type="ECO:0000250" key="2">
    <source>
        <dbReference type="UniProtKB" id="P25503"/>
    </source>
</evidence>
<evidence type="ECO:0000305" key="3"/>
<organism>
    <name type="scientific">Caenorhabditis elegans</name>
    <dbReference type="NCBI Taxonomy" id="6239"/>
    <lineage>
        <taxon>Eukaryota</taxon>
        <taxon>Metazoa</taxon>
        <taxon>Ecdysozoa</taxon>
        <taxon>Nematoda</taxon>
        <taxon>Chromadorea</taxon>
        <taxon>Rhabditida</taxon>
        <taxon>Rhabditina</taxon>
        <taxon>Rhabditomorpha</taxon>
        <taxon>Rhabditoidea</taxon>
        <taxon>Rhabditidae</taxon>
        <taxon>Peloderinae</taxon>
        <taxon>Caenorhabditis</taxon>
    </lineage>
</organism>